<accession>B5BEN4</accession>
<gene>
    <name evidence="1" type="primary">csrA</name>
    <name type="ordered locus">SSPA2498</name>
</gene>
<keyword id="KW-0010">Activator</keyword>
<keyword id="KW-0963">Cytoplasm</keyword>
<keyword id="KW-0678">Repressor</keyword>
<keyword id="KW-0694">RNA-binding</keyword>
<keyword id="KW-0810">Translation regulation</keyword>
<sequence>MLILTRRVGETLMIGDEVTVTVLGVKGNQVRIGVNAPKEVSVHREEIYQRIQAEKSQQSSY</sequence>
<protein>
    <recommendedName>
        <fullName evidence="1">Translational regulator CsrA</fullName>
    </recommendedName>
    <alternativeName>
        <fullName evidence="1">Carbon storage regulator</fullName>
    </alternativeName>
</protein>
<comment type="function">
    <text evidence="1">A key translational regulator that binds mRNA to regulate translation initiation and/or mRNA stability. Mediates global changes in gene expression, shifting from rapid growth to stress survival by linking envelope stress, the stringent response and the catabolite repression systems. Usually binds in the 5'-UTR; binding at or near the Shine-Dalgarno sequence prevents ribosome-binding, repressing translation, binding elsewhere in the 5'-UTR can activate translation and/or stabilize the mRNA. Its function is antagonized by small RNA(s).</text>
</comment>
<comment type="subunit">
    <text evidence="1">Homodimer; the beta-strands of each monomer intercalate to form a hydrophobic core, while the alpha-helices form wings that extend away from the core.</text>
</comment>
<comment type="subcellular location">
    <subcellularLocation>
        <location evidence="1">Cytoplasm</location>
    </subcellularLocation>
</comment>
<comment type="similarity">
    <text evidence="1">Belongs to the CsrA/RsmA family.</text>
</comment>
<organism>
    <name type="scientific">Salmonella paratyphi A (strain AKU_12601)</name>
    <dbReference type="NCBI Taxonomy" id="554290"/>
    <lineage>
        <taxon>Bacteria</taxon>
        <taxon>Pseudomonadati</taxon>
        <taxon>Pseudomonadota</taxon>
        <taxon>Gammaproteobacteria</taxon>
        <taxon>Enterobacterales</taxon>
        <taxon>Enterobacteriaceae</taxon>
        <taxon>Salmonella</taxon>
    </lineage>
</organism>
<feature type="chain" id="PRO_1000097507" description="Translational regulator CsrA">
    <location>
        <begin position="1"/>
        <end position="61"/>
    </location>
</feature>
<name>CSRA_SALPK</name>
<evidence type="ECO:0000255" key="1">
    <source>
        <dbReference type="HAMAP-Rule" id="MF_00167"/>
    </source>
</evidence>
<dbReference type="EMBL" id="FM200053">
    <property type="protein sequence ID" value="CAR60734.1"/>
    <property type="molecule type" value="Genomic_DNA"/>
</dbReference>
<dbReference type="RefSeq" id="WP_000906486.1">
    <property type="nucleotide sequence ID" value="NC_011147.1"/>
</dbReference>
<dbReference type="SMR" id="B5BEN4"/>
<dbReference type="GeneID" id="98389839"/>
<dbReference type="KEGG" id="sek:SSPA2498"/>
<dbReference type="HOGENOM" id="CLU_164837_2_1_6"/>
<dbReference type="Proteomes" id="UP000001869">
    <property type="component" value="Chromosome"/>
</dbReference>
<dbReference type="GO" id="GO:0005829">
    <property type="term" value="C:cytosol"/>
    <property type="evidence" value="ECO:0007669"/>
    <property type="project" value="TreeGrafter"/>
</dbReference>
<dbReference type="GO" id="GO:0048027">
    <property type="term" value="F:mRNA 5'-UTR binding"/>
    <property type="evidence" value="ECO:0007669"/>
    <property type="project" value="UniProtKB-UniRule"/>
</dbReference>
<dbReference type="GO" id="GO:0006402">
    <property type="term" value="P:mRNA catabolic process"/>
    <property type="evidence" value="ECO:0007669"/>
    <property type="project" value="InterPro"/>
</dbReference>
<dbReference type="GO" id="GO:0045947">
    <property type="term" value="P:negative regulation of translational initiation"/>
    <property type="evidence" value="ECO:0007669"/>
    <property type="project" value="UniProtKB-UniRule"/>
</dbReference>
<dbReference type="GO" id="GO:0045948">
    <property type="term" value="P:positive regulation of translational initiation"/>
    <property type="evidence" value="ECO:0007669"/>
    <property type="project" value="UniProtKB-UniRule"/>
</dbReference>
<dbReference type="GO" id="GO:0006109">
    <property type="term" value="P:regulation of carbohydrate metabolic process"/>
    <property type="evidence" value="ECO:0007669"/>
    <property type="project" value="UniProtKB-UniRule"/>
</dbReference>
<dbReference type="FunFam" id="2.60.40.4380:FF:000001">
    <property type="entry name" value="Translational regulator CsrA"/>
    <property type="match status" value="1"/>
</dbReference>
<dbReference type="Gene3D" id="2.60.40.4380">
    <property type="entry name" value="Translational regulator CsrA"/>
    <property type="match status" value="1"/>
</dbReference>
<dbReference type="HAMAP" id="MF_00167">
    <property type="entry name" value="CsrA"/>
    <property type="match status" value="1"/>
</dbReference>
<dbReference type="InterPro" id="IPR003751">
    <property type="entry name" value="CsrA"/>
</dbReference>
<dbReference type="InterPro" id="IPR036107">
    <property type="entry name" value="CsrA_sf"/>
</dbReference>
<dbReference type="NCBIfam" id="TIGR00202">
    <property type="entry name" value="csrA"/>
    <property type="match status" value="1"/>
</dbReference>
<dbReference type="NCBIfam" id="NF002469">
    <property type="entry name" value="PRK01712.1"/>
    <property type="match status" value="1"/>
</dbReference>
<dbReference type="PANTHER" id="PTHR34984">
    <property type="entry name" value="CARBON STORAGE REGULATOR"/>
    <property type="match status" value="1"/>
</dbReference>
<dbReference type="PANTHER" id="PTHR34984:SF1">
    <property type="entry name" value="CARBON STORAGE REGULATOR"/>
    <property type="match status" value="1"/>
</dbReference>
<dbReference type="Pfam" id="PF02599">
    <property type="entry name" value="CsrA"/>
    <property type="match status" value="1"/>
</dbReference>
<dbReference type="SUPFAM" id="SSF117130">
    <property type="entry name" value="CsrA-like"/>
    <property type="match status" value="1"/>
</dbReference>
<reference key="1">
    <citation type="journal article" date="2009" name="BMC Genomics">
        <title>Pseudogene accumulation in the evolutionary histories of Salmonella enterica serovars Paratyphi A and Typhi.</title>
        <authorList>
            <person name="Holt K.E."/>
            <person name="Thomson N.R."/>
            <person name="Wain J."/>
            <person name="Langridge G.C."/>
            <person name="Hasan R."/>
            <person name="Bhutta Z.A."/>
            <person name="Quail M.A."/>
            <person name="Norbertczak H."/>
            <person name="Walker D."/>
            <person name="Simmonds M."/>
            <person name="White B."/>
            <person name="Bason N."/>
            <person name="Mungall K."/>
            <person name="Dougan G."/>
            <person name="Parkhill J."/>
        </authorList>
    </citation>
    <scope>NUCLEOTIDE SEQUENCE [LARGE SCALE GENOMIC DNA]</scope>
    <source>
        <strain>AKU_12601</strain>
    </source>
</reference>
<proteinExistence type="inferred from homology"/>